<proteinExistence type="inferred from homology"/>
<accession>Q9JWN9</accession>
<accession>A1IPC0</accession>
<comment type="function">
    <text evidence="1">Catalyzes the first step in hexosamine metabolism, converting fructose-6P into glucosamine-6P using glutamine as a nitrogen source.</text>
</comment>
<comment type="catalytic activity">
    <reaction evidence="1">
        <text>D-fructose 6-phosphate + L-glutamine = D-glucosamine 6-phosphate + L-glutamate</text>
        <dbReference type="Rhea" id="RHEA:13237"/>
        <dbReference type="ChEBI" id="CHEBI:29985"/>
        <dbReference type="ChEBI" id="CHEBI:58359"/>
        <dbReference type="ChEBI" id="CHEBI:58725"/>
        <dbReference type="ChEBI" id="CHEBI:61527"/>
        <dbReference type="EC" id="2.6.1.16"/>
    </reaction>
</comment>
<comment type="subunit">
    <text evidence="1">Homodimer.</text>
</comment>
<comment type="subcellular location">
    <subcellularLocation>
        <location evidence="1">Cytoplasm</location>
    </subcellularLocation>
</comment>
<feature type="initiator methionine" description="Removed" evidence="1">
    <location>
        <position position="1"/>
    </location>
</feature>
<feature type="chain" id="PRO_0000135360" description="Glutamine--fructose-6-phosphate aminotransferase [isomerizing]">
    <location>
        <begin position="2"/>
        <end position="612"/>
    </location>
</feature>
<feature type="domain" description="Glutamine amidotransferase type-2" evidence="1">
    <location>
        <begin position="2"/>
        <end position="220"/>
    </location>
</feature>
<feature type="domain" description="SIS 1" evidence="1">
    <location>
        <begin position="288"/>
        <end position="428"/>
    </location>
</feature>
<feature type="domain" description="SIS 2" evidence="1">
    <location>
        <begin position="461"/>
        <end position="602"/>
    </location>
</feature>
<feature type="active site" description="Nucleophile; for GATase activity" evidence="1">
    <location>
        <position position="2"/>
    </location>
</feature>
<feature type="active site" description="For Fru-6P isomerization activity" evidence="1">
    <location>
        <position position="607"/>
    </location>
</feature>
<protein>
    <recommendedName>
        <fullName evidence="1">Glutamine--fructose-6-phosphate aminotransferase [isomerizing]</fullName>
        <ecNumber evidence="1">2.6.1.16</ecNumber>
    </recommendedName>
    <alternativeName>
        <fullName evidence="1">D-fructose-6-phosphate amidotransferase</fullName>
    </alternativeName>
    <alternativeName>
        <fullName evidence="1">GFAT</fullName>
    </alternativeName>
    <alternativeName>
        <fullName evidence="1">Glucosamine-6-phosphate synthase</fullName>
    </alternativeName>
    <alternativeName>
        <fullName evidence="1">Hexosephosphate aminotransferase</fullName>
    </alternativeName>
    <alternativeName>
        <fullName evidence="1">L-glutamine--D-fructose-6-phosphate amidotransferase</fullName>
    </alternativeName>
</protein>
<gene>
    <name evidence="1" type="primary">glmS</name>
    <name type="ordered locus">NMA0276</name>
</gene>
<organism>
    <name type="scientific">Neisseria meningitidis serogroup A / serotype 4A (strain DSM 15465 / Z2491)</name>
    <dbReference type="NCBI Taxonomy" id="122587"/>
    <lineage>
        <taxon>Bacteria</taxon>
        <taxon>Pseudomonadati</taxon>
        <taxon>Pseudomonadota</taxon>
        <taxon>Betaproteobacteria</taxon>
        <taxon>Neisseriales</taxon>
        <taxon>Neisseriaceae</taxon>
        <taxon>Neisseria</taxon>
    </lineage>
</organism>
<name>GLMS_NEIMA</name>
<reference key="1">
    <citation type="journal article" date="2000" name="Nature">
        <title>Complete DNA sequence of a serogroup A strain of Neisseria meningitidis Z2491.</title>
        <authorList>
            <person name="Parkhill J."/>
            <person name="Achtman M."/>
            <person name="James K.D."/>
            <person name="Bentley S.D."/>
            <person name="Churcher C.M."/>
            <person name="Klee S.R."/>
            <person name="Morelli G."/>
            <person name="Basham D."/>
            <person name="Brown D."/>
            <person name="Chillingworth T."/>
            <person name="Davies R.M."/>
            <person name="Davis P."/>
            <person name="Devlin K."/>
            <person name="Feltwell T."/>
            <person name="Hamlin N."/>
            <person name="Holroyd S."/>
            <person name="Jagels K."/>
            <person name="Leather S."/>
            <person name="Moule S."/>
            <person name="Mungall K.L."/>
            <person name="Quail M.A."/>
            <person name="Rajandream M.A."/>
            <person name="Rutherford K.M."/>
            <person name="Simmonds M."/>
            <person name="Skelton J."/>
            <person name="Whitehead S."/>
            <person name="Spratt B.G."/>
            <person name="Barrell B.G."/>
        </authorList>
    </citation>
    <scope>NUCLEOTIDE SEQUENCE [LARGE SCALE GENOMIC DNA]</scope>
    <source>
        <strain>DSM 15465 / Z2491</strain>
    </source>
</reference>
<evidence type="ECO:0000255" key="1">
    <source>
        <dbReference type="HAMAP-Rule" id="MF_00164"/>
    </source>
</evidence>
<sequence>MCGIVGAIRAHHNVVDFLTDGLKRLEYRGYDSSGIAVNTDGKIKRVRRVGRVQLMEDAAREKGISGGIGIGHTRWATHGGVTEPNAHPHISGGMIAVVHNGIIENFESERKRLEGLGYRFESQTDTEVIAHSINHEYAQNGGKLFEAVQEAVKRFHGAYAIAVIAQDKPDELVVARMGCPLLVALGDDETFIASDVSAVIAFTRRVAYLEDGDIALLASDGIKRLTDKSGLPAERKVKVSELSLASLELGPYSHFMQKEIHEQPRAIADTAEVFLDGGFIPENFGKNAKSVFESIRSVKILACGTSYYAALTAKYWLESIAKIPSDVEIASEYRYRSVIADPDQLVITISQSGETLDTMEALKYAKSLGHRHSLSICNVMESALPRESSLVLYTRAGAEIGVASTKAFTTQLVALFGLAVTLAKVRGLVSEEDEARYTEELRQLPGSVQHALNLEPQIAAWAQQFAKKTSALFLGRGIHYPIALEGALKLKEITYIHAEAYPAGELKHGPLALVDENMPVVVIAPNDSLLDKVKANMQEVGARGGELFVFADLDSNFNATEGVHVIRAPRHVGELSPVVHTIPVQLLSYHVALARGTDVDKPRNLAKSVTVE</sequence>
<keyword id="KW-0032">Aminotransferase</keyword>
<keyword id="KW-0963">Cytoplasm</keyword>
<keyword id="KW-0315">Glutamine amidotransferase</keyword>
<keyword id="KW-0677">Repeat</keyword>
<keyword id="KW-0808">Transferase</keyword>
<dbReference type="EC" id="2.6.1.16" evidence="1"/>
<dbReference type="EMBL" id="AL157959">
    <property type="protein sequence ID" value="CAM07583.1"/>
    <property type="molecule type" value="Genomic_DNA"/>
</dbReference>
<dbReference type="PIR" id="H82022">
    <property type="entry name" value="H82022"/>
</dbReference>
<dbReference type="RefSeq" id="WP_002240146.1">
    <property type="nucleotide sequence ID" value="NC_003116.1"/>
</dbReference>
<dbReference type="SMR" id="Q9JWN9"/>
<dbReference type="EnsemblBacteria" id="CAM07583">
    <property type="protein sequence ID" value="CAM07583"/>
    <property type="gene ID" value="NMA0276"/>
</dbReference>
<dbReference type="KEGG" id="nma:NMA0276"/>
<dbReference type="HOGENOM" id="CLU_012520_5_2_4"/>
<dbReference type="Proteomes" id="UP000000626">
    <property type="component" value="Chromosome"/>
</dbReference>
<dbReference type="GO" id="GO:0005829">
    <property type="term" value="C:cytosol"/>
    <property type="evidence" value="ECO:0007669"/>
    <property type="project" value="TreeGrafter"/>
</dbReference>
<dbReference type="GO" id="GO:0097367">
    <property type="term" value="F:carbohydrate derivative binding"/>
    <property type="evidence" value="ECO:0007669"/>
    <property type="project" value="InterPro"/>
</dbReference>
<dbReference type="GO" id="GO:0004360">
    <property type="term" value="F:glutamine-fructose-6-phosphate transaminase (isomerizing) activity"/>
    <property type="evidence" value="ECO:0007669"/>
    <property type="project" value="UniProtKB-UniRule"/>
</dbReference>
<dbReference type="GO" id="GO:0005975">
    <property type="term" value="P:carbohydrate metabolic process"/>
    <property type="evidence" value="ECO:0007669"/>
    <property type="project" value="UniProtKB-UniRule"/>
</dbReference>
<dbReference type="GO" id="GO:0006002">
    <property type="term" value="P:fructose 6-phosphate metabolic process"/>
    <property type="evidence" value="ECO:0007669"/>
    <property type="project" value="TreeGrafter"/>
</dbReference>
<dbReference type="GO" id="GO:0006487">
    <property type="term" value="P:protein N-linked glycosylation"/>
    <property type="evidence" value="ECO:0007669"/>
    <property type="project" value="TreeGrafter"/>
</dbReference>
<dbReference type="GO" id="GO:0006047">
    <property type="term" value="P:UDP-N-acetylglucosamine metabolic process"/>
    <property type="evidence" value="ECO:0007669"/>
    <property type="project" value="TreeGrafter"/>
</dbReference>
<dbReference type="CDD" id="cd00714">
    <property type="entry name" value="GFAT"/>
    <property type="match status" value="1"/>
</dbReference>
<dbReference type="CDD" id="cd05008">
    <property type="entry name" value="SIS_GlmS_GlmD_1"/>
    <property type="match status" value="1"/>
</dbReference>
<dbReference type="CDD" id="cd05009">
    <property type="entry name" value="SIS_GlmS_GlmD_2"/>
    <property type="match status" value="1"/>
</dbReference>
<dbReference type="FunFam" id="3.40.50.10490:FF:000001">
    <property type="entry name" value="Glutamine--fructose-6-phosphate aminotransferase [isomerizing]"/>
    <property type="match status" value="1"/>
</dbReference>
<dbReference type="FunFam" id="3.40.50.10490:FF:000002">
    <property type="entry name" value="Glutamine--fructose-6-phosphate aminotransferase [isomerizing]"/>
    <property type="match status" value="1"/>
</dbReference>
<dbReference type="FunFam" id="3.60.20.10:FF:000006">
    <property type="entry name" value="Glutamine--fructose-6-phosphate aminotransferase [isomerizing]"/>
    <property type="match status" value="1"/>
</dbReference>
<dbReference type="Gene3D" id="3.40.50.10490">
    <property type="entry name" value="Glucose-6-phosphate isomerase like protein, domain 1"/>
    <property type="match status" value="2"/>
</dbReference>
<dbReference type="Gene3D" id="3.60.20.10">
    <property type="entry name" value="Glutamine Phosphoribosylpyrophosphate, subunit 1, domain 1"/>
    <property type="match status" value="1"/>
</dbReference>
<dbReference type="HAMAP" id="MF_00164">
    <property type="entry name" value="GlmS"/>
    <property type="match status" value="1"/>
</dbReference>
<dbReference type="InterPro" id="IPR017932">
    <property type="entry name" value="GATase_2_dom"/>
</dbReference>
<dbReference type="InterPro" id="IPR005855">
    <property type="entry name" value="GFAT"/>
</dbReference>
<dbReference type="InterPro" id="IPR047084">
    <property type="entry name" value="GFAT_N"/>
</dbReference>
<dbReference type="InterPro" id="IPR035466">
    <property type="entry name" value="GlmS/AgaS_SIS"/>
</dbReference>
<dbReference type="InterPro" id="IPR035490">
    <property type="entry name" value="GlmS/FrlB_SIS"/>
</dbReference>
<dbReference type="InterPro" id="IPR029055">
    <property type="entry name" value="Ntn_hydrolases_N"/>
</dbReference>
<dbReference type="InterPro" id="IPR001347">
    <property type="entry name" value="SIS_dom"/>
</dbReference>
<dbReference type="InterPro" id="IPR046348">
    <property type="entry name" value="SIS_dom_sf"/>
</dbReference>
<dbReference type="NCBIfam" id="TIGR01135">
    <property type="entry name" value="glmS"/>
    <property type="match status" value="1"/>
</dbReference>
<dbReference type="NCBIfam" id="NF001484">
    <property type="entry name" value="PRK00331.1"/>
    <property type="match status" value="1"/>
</dbReference>
<dbReference type="PANTHER" id="PTHR10937">
    <property type="entry name" value="GLUCOSAMINE--FRUCTOSE-6-PHOSPHATE AMINOTRANSFERASE, ISOMERIZING"/>
    <property type="match status" value="1"/>
</dbReference>
<dbReference type="PANTHER" id="PTHR10937:SF0">
    <property type="entry name" value="GLUTAMINE--FRUCTOSE-6-PHOSPHATE TRANSAMINASE (ISOMERIZING)"/>
    <property type="match status" value="1"/>
</dbReference>
<dbReference type="Pfam" id="PF13522">
    <property type="entry name" value="GATase_6"/>
    <property type="match status" value="1"/>
</dbReference>
<dbReference type="Pfam" id="PF01380">
    <property type="entry name" value="SIS"/>
    <property type="match status" value="2"/>
</dbReference>
<dbReference type="SUPFAM" id="SSF56235">
    <property type="entry name" value="N-terminal nucleophile aminohydrolases (Ntn hydrolases)"/>
    <property type="match status" value="1"/>
</dbReference>
<dbReference type="SUPFAM" id="SSF53697">
    <property type="entry name" value="SIS domain"/>
    <property type="match status" value="1"/>
</dbReference>
<dbReference type="PROSITE" id="PS51278">
    <property type="entry name" value="GATASE_TYPE_2"/>
    <property type="match status" value="1"/>
</dbReference>
<dbReference type="PROSITE" id="PS51464">
    <property type="entry name" value="SIS"/>
    <property type="match status" value="2"/>
</dbReference>